<keyword id="KW-1003">Cell membrane</keyword>
<keyword id="KW-0472">Membrane</keyword>
<keyword id="KW-0520">NAD</keyword>
<keyword id="KW-0874">Quinone</keyword>
<keyword id="KW-1278">Translocase</keyword>
<keyword id="KW-0812">Transmembrane</keyword>
<keyword id="KW-1133">Transmembrane helix</keyword>
<keyword id="KW-0813">Transport</keyword>
<name>NUOK_DEIGD</name>
<protein>
    <recommendedName>
        <fullName evidence="1">NADH-quinone oxidoreductase subunit K</fullName>
        <ecNumber evidence="1">7.1.1.-</ecNumber>
    </recommendedName>
    <alternativeName>
        <fullName evidence="1">NADH dehydrogenase I subunit K</fullName>
    </alternativeName>
    <alternativeName>
        <fullName evidence="1">NDH-1 subunit K</fullName>
    </alternativeName>
</protein>
<evidence type="ECO:0000255" key="1">
    <source>
        <dbReference type="HAMAP-Rule" id="MF_01456"/>
    </source>
</evidence>
<gene>
    <name evidence="1" type="primary">nuoK</name>
    <name type="ordered locus">Dgeo_0919</name>
</gene>
<sequence>MAPTAYYVALSGLLFAIGMIGVLTRRTAIMIFLSVELMLNAANLALVAFARAWGDLTAQTAVFIVMTLAAAEVAIGLAIIVAIFRKRETTNVDDLATLKG</sequence>
<dbReference type="EC" id="7.1.1.-" evidence="1"/>
<dbReference type="EMBL" id="CP000359">
    <property type="protein sequence ID" value="ABF45221.1"/>
    <property type="molecule type" value="Genomic_DNA"/>
</dbReference>
<dbReference type="RefSeq" id="WP_011530059.1">
    <property type="nucleotide sequence ID" value="NC_008025.1"/>
</dbReference>
<dbReference type="SMR" id="Q1IZW3"/>
<dbReference type="STRING" id="319795.Dgeo_0919"/>
<dbReference type="KEGG" id="dge:Dgeo_0919"/>
<dbReference type="eggNOG" id="COG0713">
    <property type="taxonomic scope" value="Bacteria"/>
</dbReference>
<dbReference type="HOGENOM" id="CLU_144724_0_0_0"/>
<dbReference type="Proteomes" id="UP000002431">
    <property type="component" value="Chromosome"/>
</dbReference>
<dbReference type="GO" id="GO:0030964">
    <property type="term" value="C:NADH dehydrogenase complex"/>
    <property type="evidence" value="ECO:0007669"/>
    <property type="project" value="TreeGrafter"/>
</dbReference>
<dbReference type="GO" id="GO:0005886">
    <property type="term" value="C:plasma membrane"/>
    <property type="evidence" value="ECO:0007669"/>
    <property type="project" value="UniProtKB-SubCell"/>
</dbReference>
<dbReference type="GO" id="GO:0050136">
    <property type="term" value="F:NADH:ubiquinone reductase (non-electrogenic) activity"/>
    <property type="evidence" value="ECO:0007669"/>
    <property type="project" value="UniProtKB-UniRule"/>
</dbReference>
<dbReference type="GO" id="GO:0048038">
    <property type="term" value="F:quinone binding"/>
    <property type="evidence" value="ECO:0007669"/>
    <property type="project" value="UniProtKB-KW"/>
</dbReference>
<dbReference type="GO" id="GO:0042773">
    <property type="term" value="P:ATP synthesis coupled electron transport"/>
    <property type="evidence" value="ECO:0007669"/>
    <property type="project" value="InterPro"/>
</dbReference>
<dbReference type="FunFam" id="1.10.287.3510:FF:000001">
    <property type="entry name" value="NADH-quinone oxidoreductase subunit K"/>
    <property type="match status" value="1"/>
</dbReference>
<dbReference type="Gene3D" id="1.10.287.3510">
    <property type="match status" value="1"/>
</dbReference>
<dbReference type="HAMAP" id="MF_01456">
    <property type="entry name" value="NDH1_NuoK"/>
    <property type="match status" value="1"/>
</dbReference>
<dbReference type="InterPro" id="IPR001133">
    <property type="entry name" value="NADH_UbQ_OxRdtase_chain4L/K"/>
</dbReference>
<dbReference type="InterPro" id="IPR039428">
    <property type="entry name" value="NUOK/Mnh_C1-like"/>
</dbReference>
<dbReference type="NCBIfam" id="NF004320">
    <property type="entry name" value="PRK05715.1-2"/>
    <property type="match status" value="1"/>
</dbReference>
<dbReference type="NCBIfam" id="NF004321">
    <property type="entry name" value="PRK05715.1-3"/>
    <property type="match status" value="1"/>
</dbReference>
<dbReference type="PANTHER" id="PTHR11434:SF21">
    <property type="entry name" value="NADH DEHYDROGENASE SUBUNIT 4L-RELATED"/>
    <property type="match status" value="1"/>
</dbReference>
<dbReference type="PANTHER" id="PTHR11434">
    <property type="entry name" value="NADH-UBIQUINONE OXIDOREDUCTASE SUBUNIT ND4L"/>
    <property type="match status" value="1"/>
</dbReference>
<dbReference type="Pfam" id="PF00420">
    <property type="entry name" value="Oxidored_q2"/>
    <property type="match status" value="1"/>
</dbReference>
<organism>
    <name type="scientific">Deinococcus geothermalis (strain DSM 11300 / CIP 105573 / AG-3a)</name>
    <dbReference type="NCBI Taxonomy" id="319795"/>
    <lineage>
        <taxon>Bacteria</taxon>
        <taxon>Thermotogati</taxon>
        <taxon>Deinococcota</taxon>
        <taxon>Deinococci</taxon>
        <taxon>Deinococcales</taxon>
        <taxon>Deinococcaceae</taxon>
        <taxon>Deinococcus</taxon>
    </lineage>
</organism>
<feature type="chain" id="PRO_0000390027" description="NADH-quinone oxidoreductase subunit K">
    <location>
        <begin position="1"/>
        <end position="100"/>
    </location>
</feature>
<feature type="transmembrane region" description="Helical" evidence="1">
    <location>
        <begin position="3"/>
        <end position="23"/>
    </location>
</feature>
<feature type="transmembrane region" description="Helical" evidence="1">
    <location>
        <begin position="29"/>
        <end position="49"/>
    </location>
</feature>
<feature type="transmembrane region" description="Helical" evidence="1">
    <location>
        <begin position="63"/>
        <end position="83"/>
    </location>
</feature>
<reference key="1">
    <citation type="submission" date="2006-04" db="EMBL/GenBank/DDBJ databases">
        <title>Complete sequence of chromosome of Deinococcus geothermalis DSM 11300.</title>
        <authorList>
            <person name="Copeland A."/>
            <person name="Lucas S."/>
            <person name="Lapidus A."/>
            <person name="Barry K."/>
            <person name="Detter J.C."/>
            <person name="Glavina del Rio T."/>
            <person name="Hammon N."/>
            <person name="Israni S."/>
            <person name="Dalin E."/>
            <person name="Tice H."/>
            <person name="Pitluck S."/>
            <person name="Brettin T."/>
            <person name="Bruce D."/>
            <person name="Han C."/>
            <person name="Tapia R."/>
            <person name="Saunders E."/>
            <person name="Gilna P."/>
            <person name="Schmutz J."/>
            <person name="Larimer F."/>
            <person name="Land M."/>
            <person name="Hauser L."/>
            <person name="Kyrpides N."/>
            <person name="Kim E."/>
            <person name="Daly M.J."/>
            <person name="Fredrickson J.K."/>
            <person name="Makarova K.S."/>
            <person name="Gaidamakova E.K."/>
            <person name="Zhai M."/>
            <person name="Richardson P."/>
        </authorList>
    </citation>
    <scope>NUCLEOTIDE SEQUENCE [LARGE SCALE GENOMIC DNA]</scope>
    <source>
        <strain>DSM 11300 / CIP 105573 / AG-3a</strain>
    </source>
</reference>
<comment type="function">
    <text evidence="1">NDH-1 shuttles electrons from NADH, via FMN and iron-sulfur (Fe-S) centers, to quinones in the respiratory chain. The immediate electron acceptor for the enzyme in this species is believed to be a menaquinone. Couples the redox reaction to proton translocation (for every two electrons transferred, four hydrogen ions are translocated across the cytoplasmic membrane), and thus conserves the redox energy in a proton gradient.</text>
</comment>
<comment type="catalytic activity">
    <reaction evidence="1">
        <text>a quinone + NADH + 5 H(+)(in) = a quinol + NAD(+) + 4 H(+)(out)</text>
        <dbReference type="Rhea" id="RHEA:57888"/>
        <dbReference type="ChEBI" id="CHEBI:15378"/>
        <dbReference type="ChEBI" id="CHEBI:24646"/>
        <dbReference type="ChEBI" id="CHEBI:57540"/>
        <dbReference type="ChEBI" id="CHEBI:57945"/>
        <dbReference type="ChEBI" id="CHEBI:132124"/>
    </reaction>
</comment>
<comment type="subunit">
    <text evidence="1">NDH-1 is composed of 15 different subunits. Subunits NuoA, H, J, K, L, M, N constitute the membrane sector of the complex.</text>
</comment>
<comment type="subcellular location">
    <subcellularLocation>
        <location evidence="1">Cell membrane</location>
        <topology evidence="1">Multi-pass membrane protein</topology>
    </subcellularLocation>
</comment>
<comment type="similarity">
    <text evidence="1">Belongs to the complex I subunit 4L family.</text>
</comment>
<proteinExistence type="inferred from homology"/>
<accession>Q1IZW3</accession>